<feature type="chain" id="PRO_0000325575" description="Dihydroorotase">
    <location>
        <begin position="1"/>
        <end position="343"/>
    </location>
</feature>
<feature type="active site" evidence="1">
    <location>
        <position position="247"/>
    </location>
</feature>
<feature type="binding site" evidence="1">
    <location>
        <position position="14"/>
    </location>
    <ligand>
        <name>Zn(2+)</name>
        <dbReference type="ChEBI" id="CHEBI:29105"/>
        <label>1</label>
    </ligand>
</feature>
<feature type="binding site" evidence="1">
    <location>
        <begin position="16"/>
        <end position="18"/>
    </location>
    <ligand>
        <name>substrate</name>
    </ligand>
</feature>
<feature type="binding site" evidence="1">
    <location>
        <position position="16"/>
    </location>
    <ligand>
        <name>Zn(2+)</name>
        <dbReference type="ChEBI" id="CHEBI:29105"/>
        <label>1</label>
    </ligand>
</feature>
<feature type="binding site" evidence="1">
    <location>
        <position position="42"/>
    </location>
    <ligand>
        <name>substrate</name>
    </ligand>
</feature>
<feature type="binding site" description="via carbamate group" evidence="1">
    <location>
        <position position="99"/>
    </location>
    <ligand>
        <name>Zn(2+)</name>
        <dbReference type="ChEBI" id="CHEBI:29105"/>
        <label>1</label>
    </ligand>
</feature>
<feature type="binding site" description="via carbamate group" evidence="1">
    <location>
        <position position="99"/>
    </location>
    <ligand>
        <name>Zn(2+)</name>
        <dbReference type="ChEBI" id="CHEBI:29105"/>
        <label>2</label>
    </ligand>
</feature>
<feature type="binding site" evidence="1">
    <location>
        <position position="136"/>
    </location>
    <ligand>
        <name>substrate</name>
    </ligand>
</feature>
<feature type="binding site" evidence="1">
    <location>
        <position position="136"/>
    </location>
    <ligand>
        <name>Zn(2+)</name>
        <dbReference type="ChEBI" id="CHEBI:29105"/>
        <label>2</label>
    </ligand>
</feature>
<feature type="binding site" evidence="1">
    <location>
        <position position="174"/>
    </location>
    <ligand>
        <name>Zn(2+)</name>
        <dbReference type="ChEBI" id="CHEBI:29105"/>
        <label>2</label>
    </ligand>
</feature>
<feature type="binding site" evidence="1">
    <location>
        <position position="219"/>
    </location>
    <ligand>
        <name>substrate</name>
    </ligand>
</feature>
<feature type="binding site" evidence="1">
    <location>
        <position position="247"/>
    </location>
    <ligand>
        <name>Zn(2+)</name>
        <dbReference type="ChEBI" id="CHEBI:29105"/>
        <label>1</label>
    </ligand>
</feature>
<feature type="binding site" evidence="1">
    <location>
        <position position="251"/>
    </location>
    <ligand>
        <name>substrate</name>
    </ligand>
</feature>
<feature type="binding site" evidence="1">
    <location>
        <position position="263"/>
    </location>
    <ligand>
        <name>substrate</name>
    </ligand>
</feature>
<feature type="modified residue" description="N6-carboxylysine" evidence="1">
    <location>
        <position position="99"/>
    </location>
</feature>
<keyword id="KW-0378">Hydrolase</keyword>
<keyword id="KW-0479">Metal-binding</keyword>
<keyword id="KW-0665">Pyrimidine biosynthesis</keyword>
<keyword id="KW-1185">Reference proteome</keyword>
<keyword id="KW-0862">Zinc</keyword>
<proteinExistence type="inferred from homology"/>
<accession>A1SX20</accession>
<organism>
    <name type="scientific">Psychromonas ingrahamii (strain DSM 17664 / CCUG 51855 / 37)</name>
    <dbReference type="NCBI Taxonomy" id="357804"/>
    <lineage>
        <taxon>Bacteria</taxon>
        <taxon>Pseudomonadati</taxon>
        <taxon>Pseudomonadota</taxon>
        <taxon>Gammaproteobacteria</taxon>
        <taxon>Alteromonadales</taxon>
        <taxon>Psychromonadaceae</taxon>
        <taxon>Psychromonas</taxon>
    </lineage>
</organism>
<name>PYRC_PSYIN</name>
<protein>
    <recommendedName>
        <fullName evidence="1">Dihydroorotase</fullName>
        <shortName evidence="1">DHOase</shortName>
        <ecNumber evidence="1">3.5.2.3</ecNumber>
    </recommendedName>
</protein>
<comment type="function">
    <text evidence="1">Catalyzes the reversible cyclization of carbamoyl aspartate to dihydroorotate.</text>
</comment>
<comment type="catalytic activity">
    <reaction evidence="1">
        <text>(S)-dihydroorotate + H2O = N-carbamoyl-L-aspartate + H(+)</text>
        <dbReference type="Rhea" id="RHEA:24296"/>
        <dbReference type="ChEBI" id="CHEBI:15377"/>
        <dbReference type="ChEBI" id="CHEBI:15378"/>
        <dbReference type="ChEBI" id="CHEBI:30864"/>
        <dbReference type="ChEBI" id="CHEBI:32814"/>
        <dbReference type="EC" id="3.5.2.3"/>
    </reaction>
</comment>
<comment type="cofactor">
    <cofactor evidence="1">
        <name>Zn(2+)</name>
        <dbReference type="ChEBI" id="CHEBI:29105"/>
    </cofactor>
    <text evidence="1">Binds 2 Zn(2+) ions per subunit.</text>
</comment>
<comment type="pathway">
    <text evidence="1">Pyrimidine metabolism; UMP biosynthesis via de novo pathway; (S)-dihydroorotate from bicarbonate: step 3/3.</text>
</comment>
<comment type="subunit">
    <text evidence="1">Homodimer.</text>
</comment>
<comment type="similarity">
    <text evidence="1">Belongs to the metallo-dependent hydrolases superfamily. DHOase family. Class II DHOase subfamily.</text>
</comment>
<dbReference type="EC" id="3.5.2.3" evidence="1"/>
<dbReference type="EMBL" id="CP000510">
    <property type="protein sequence ID" value="ABM04035.1"/>
    <property type="molecule type" value="Genomic_DNA"/>
</dbReference>
<dbReference type="RefSeq" id="WP_011770595.1">
    <property type="nucleotide sequence ID" value="NC_008709.1"/>
</dbReference>
<dbReference type="SMR" id="A1SX20"/>
<dbReference type="STRING" id="357804.Ping_2294"/>
<dbReference type="MEROPS" id="M38.A02"/>
<dbReference type="KEGG" id="pin:Ping_2294"/>
<dbReference type="eggNOG" id="COG0418">
    <property type="taxonomic scope" value="Bacteria"/>
</dbReference>
<dbReference type="HOGENOM" id="CLU_041558_1_0_6"/>
<dbReference type="OrthoDB" id="9808095at2"/>
<dbReference type="UniPathway" id="UPA00070">
    <property type="reaction ID" value="UER00117"/>
</dbReference>
<dbReference type="Proteomes" id="UP000000639">
    <property type="component" value="Chromosome"/>
</dbReference>
<dbReference type="GO" id="GO:0005829">
    <property type="term" value="C:cytosol"/>
    <property type="evidence" value="ECO:0007669"/>
    <property type="project" value="TreeGrafter"/>
</dbReference>
<dbReference type="GO" id="GO:0004151">
    <property type="term" value="F:dihydroorotase activity"/>
    <property type="evidence" value="ECO:0007669"/>
    <property type="project" value="UniProtKB-UniRule"/>
</dbReference>
<dbReference type="GO" id="GO:0008270">
    <property type="term" value="F:zinc ion binding"/>
    <property type="evidence" value="ECO:0007669"/>
    <property type="project" value="UniProtKB-UniRule"/>
</dbReference>
<dbReference type="GO" id="GO:0006207">
    <property type="term" value="P:'de novo' pyrimidine nucleobase biosynthetic process"/>
    <property type="evidence" value="ECO:0007669"/>
    <property type="project" value="TreeGrafter"/>
</dbReference>
<dbReference type="GO" id="GO:0044205">
    <property type="term" value="P:'de novo' UMP biosynthetic process"/>
    <property type="evidence" value="ECO:0007669"/>
    <property type="project" value="UniProtKB-UniRule"/>
</dbReference>
<dbReference type="CDD" id="cd01294">
    <property type="entry name" value="DHOase"/>
    <property type="match status" value="1"/>
</dbReference>
<dbReference type="FunFam" id="3.20.20.140:FF:000006">
    <property type="entry name" value="Dihydroorotase"/>
    <property type="match status" value="1"/>
</dbReference>
<dbReference type="Gene3D" id="3.20.20.140">
    <property type="entry name" value="Metal-dependent hydrolases"/>
    <property type="match status" value="1"/>
</dbReference>
<dbReference type="HAMAP" id="MF_00219">
    <property type="entry name" value="PyrC_classII"/>
    <property type="match status" value="1"/>
</dbReference>
<dbReference type="InterPro" id="IPR006680">
    <property type="entry name" value="Amidohydro-rel"/>
</dbReference>
<dbReference type="InterPro" id="IPR004721">
    <property type="entry name" value="DHOdimr"/>
</dbReference>
<dbReference type="InterPro" id="IPR002195">
    <property type="entry name" value="Dihydroorotase_CS"/>
</dbReference>
<dbReference type="InterPro" id="IPR032466">
    <property type="entry name" value="Metal_Hydrolase"/>
</dbReference>
<dbReference type="NCBIfam" id="TIGR00856">
    <property type="entry name" value="pyrC_dimer"/>
    <property type="match status" value="1"/>
</dbReference>
<dbReference type="PANTHER" id="PTHR43137">
    <property type="entry name" value="DIHYDROOROTASE"/>
    <property type="match status" value="1"/>
</dbReference>
<dbReference type="PANTHER" id="PTHR43137:SF1">
    <property type="entry name" value="DIHYDROOROTASE"/>
    <property type="match status" value="1"/>
</dbReference>
<dbReference type="Pfam" id="PF01979">
    <property type="entry name" value="Amidohydro_1"/>
    <property type="match status" value="1"/>
</dbReference>
<dbReference type="PIRSF" id="PIRSF001237">
    <property type="entry name" value="DHOdimr"/>
    <property type="match status" value="1"/>
</dbReference>
<dbReference type="SUPFAM" id="SSF51556">
    <property type="entry name" value="Metallo-dependent hydrolases"/>
    <property type="match status" value="1"/>
</dbReference>
<dbReference type="PROSITE" id="PS00482">
    <property type="entry name" value="DIHYDROOROTASE_1"/>
    <property type="match status" value="1"/>
</dbReference>
<dbReference type="PROSITE" id="PS00483">
    <property type="entry name" value="DIHYDROOROTASE_2"/>
    <property type="match status" value="1"/>
</dbReference>
<sequence length="343" mass="37554">MTTTRTITRPDDWHLHLRDGEVLKDTVRDTSRYMGRAVIMPNLVPPVTNTALALAYQARIFAAQPKAGFKPLMTLYLTDNTSADEIKKAKASGQIYAAKLYPAGATTNSESGVTSVEKIKEALQAMQEVGMLLLIHGEVTASDIDIFDREEIFLQKVLAPIVASYPNLKIVLEHITTANAVDFVNNAGDNVAATITAHHLMFNRNHMLVGGIRPHLYCLPILKRNIHQQALIKAATSGAKKFFLGTDSAPHAVNRKEAACGCAGCYTAHAAIELYAEVFEQAGALDKLEAFASFNGPDFYNLPRNSDTITLEKSAWDVPASMSFGNQQVVPIKANEQMLWKVL</sequence>
<evidence type="ECO:0000255" key="1">
    <source>
        <dbReference type="HAMAP-Rule" id="MF_00219"/>
    </source>
</evidence>
<reference key="1">
    <citation type="journal article" date="2008" name="BMC Genomics">
        <title>Genomics of an extreme psychrophile, Psychromonas ingrahamii.</title>
        <authorList>
            <person name="Riley M."/>
            <person name="Staley J.T."/>
            <person name="Danchin A."/>
            <person name="Wang T.Z."/>
            <person name="Brettin T.S."/>
            <person name="Hauser L.J."/>
            <person name="Land M.L."/>
            <person name="Thompson L.S."/>
        </authorList>
    </citation>
    <scope>NUCLEOTIDE SEQUENCE [LARGE SCALE GENOMIC DNA]</scope>
    <source>
        <strain>DSM 17664 / CCUG 51855 / 37</strain>
    </source>
</reference>
<gene>
    <name evidence="1" type="primary">pyrC</name>
    <name type="ordered locus">Ping_2294</name>
</gene>